<reference key="1">
    <citation type="journal article" date="2001" name="Proc. Natl. Acad. Sci. U.S.A.">
        <title>Genome sequence of an industrial microorganism Streptomyces avermitilis: deducing the ability of producing secondary metabolites.</title>
        <authorList>
            <person name="Omura S."/>
            <person name="Ikeda H."/>
            <person name="Ishikawa J."/>
            <person name="Hanamoto A."/>
            <person name="Takahashi C."/>
            <person name="Shinose M."/>
            <person name="Takahashi Y."/>
            <person name="Horikawa H."/>
            <person name="Nakazawa H."/>
            <person name="Osonoe T."/>
            <person name="Kikuchi H."/>
            <person name="Shiba T."/>
            <person name="Sakaki Y."/>
            <person name="Hattori M."/>
        </authorList>
    </citation>
    <scope>NUCLEOTIDE SEQUENCE [LARGE SCALE GENOMIC DNA]</scope>
    <source>
        <strain>ATCC 31267 / DSM 46492 / JCM 5070 / NBRC 14893 / NCIMB 12804 / NRRL 8165 / MA-4680</strain>
    </source>
</reference>
<reference key="2">
    <citation type="journal article" date="2003" name="Nat. Biotechnol.">
        <title>Complete genome sequence and comparative analysis of the industrial microorganism Streptomyces avermitilis.</title>
        <authorList>
            <person name="Ikeda H."/>
            <person name="Ishikawa J."/>
            <person name="Hanamoto A."/>
            <person name="Shinose M."/>
            <person name="Kikuchi H."/>
            <person name="Shiba T."/>
            <person name="Sakaki Y."/>
            <person name="Hattori M."/>
            <person name="Omura S."/>
        </authorList>
    </citation>
    <scope>NUCLEOTIDE SEQUENCE [LARGE SCALE GENOMIC DNA]</scope>
    <source>
        <strain>ATCC 31267 / DSM 46492 / JCM 5070 / NBRC 14893 / NCIMB 12804 / NRRL 8165 / MA-4680</strain>
    </source>
</reference>
<sequence>MTAAGVRATARIGARGDGRGGTSLPVLEGEGPLALRRTRASGSEARVMLVGAMSGPLGGDHFTVEATVAAGARLHVGSAAATIALPGQAKGEARYDVLLDVAAGGELRWLPEQLISAGGSELYVSTRIDLEPGARLVFREEQVLGRVGEEPGRLTSRLTLRIGGRAVLDQELACGPGAPGGWDGPAVLGGHRALGQLVVVRPEFEREPVRARLLGESAALTPLGGAAALVTALAPDALLLRRVLDEALSSLG</sequence>
<dbReference type="EMBL" id="BA000030">
    <property type="protein sequence ID" value="BAC74820.1"/>
    <property type="molecule type" value="Genomic_DNA"/>
</dbReference>
<dbReference type="RefSeq" id="WP_010988504.1">
    <property type="nucleotide sequence ID" value="NZ_JZJK01000085.1"/>
</dbReference>
<dbReference type="SMR" id="Q826R6"/>
<dbReference type="GeneID" id="41544182"/>
<dbReference type="KEGG" id="sma:SAVERM_7109"/>
<dbReference type="eggNOG" id="COG0829">
    <property type="taxonomic scope" value="Bacteria"/>
</dbReference>
<dbReference type="HOGENOM" id="CLU_055097_2_0_11"/>
<dbReference type="OrthoDB" id="8677206at2"/>
<dbReference type="Proteomes" id="UP000000428">
    <property type="component" value="Chromosome"/>
</dbReference>
<dbReference type="GO" id="GO:0005737">
    <property type="term" value="C:cytoplasm"/>
    <property type="evidence" value="ECO:0007669"/>
    <property type="project" value="UniProtKB-SubCell"/>
</dbReference>
<dbReference type="GO" id="GO:0016151">
    <property type="term" value="F:nickel cation binding"/>
    <property type="evidence" value="ECO:0007669"/>
    <property type="project" value="UniProtKB-UniRule"/>
</dbReference>
<dbReference type="HAMAP" id="MF_01384">
    <property type="entry name" value="UreD"/>
    <property type="match status" value="1"/>
</dbReference>
<dbReference type="InterPro" id="IPR002669">
    <property type="entry name" value="UreD"/>
</dbReference>
<dbReference type="Pfam" id="PF01774">
    <property type="entry name" value="UreD"/>
    <property type="match status" value="1"/>
</dbReference>
<feature type="chain" id="PRO_0000340520" description="Urease accessory protein UreD">
    <location>
        <begin position="1"/>
        <end position="252"/>
    </location>
</feature>
<proteinExistence type="inferred from homology"/>
<accession>Q826R6</accession>
<name>URED_STRAW</name>
<keyword id="KW-0143">Chaperone</keyword>
<keyword id="KW-0963">Cytoplasm</keyword>
<keyword id="KW-0996">Nickel insertion</keyword>
<keyword id="KW-1185">Reference proteome</keyword>
<evidence type="ECO:0000255" key="1">
    <source>
        <dbReference type="HAMAP-Rule" id="MF_01384"/>
    </source>
</evidence>
<gene>
    <name evidence="1" type="primary">ureD</name>
    <name type="synonym">sav7109</name>
    <name type="ordered locus">SAV_7109</name>
</gene>
<organism>
    <name type="scientific">Streptomyces avermitilis (strain ATCC 31267 / DSM 46492 / JCM 5070 / NBRC 14893 / NCIMB 12804 / NRRL 8165 / MA-4680)</name>
    <dbReference type="NCBI Taxonomy" id="227882"/>
    <lineage>
        <taxon>Bacteria</taxon>
        <taxon>Bacillati</taxon>
        <taxon>Actinomycetota</taxon>
        <taxon>Actinomycetes</taxon>
        <taxon>Kitasatosporales</taxon>
        <taxon>Streptomycetaceae</taxon>
        <taxon>Streptomyces</taxon>
    </lineage>
</organism>
<protein>
    <recommendedName>
        <fullName evidence="1">Urease accessory protein UreD</fullName>
    </recommendedName>
</protein>
<comment type="function">
    <text evidence="1">Required for maturation of urease via the functional incorporation of the urease nickel metallocenter.</text>
</comment>
<comment type="subunit">
    <text evidence="1">UreD, UreF and UreG form a complex that acts as a GTP-hydrolysis-dependent molecular chaperone, activating the urease apoprotein by helping to assemble the nickel containing metallocenter of UreC. The UreE protein probably delivers the nickel.</text>
</comment>
<comment type="subcellular location">
    <subcellularLocation>
        <location evidence="1">Cytoplasm</location>
    </subcellularLocation>
</comment>
<comment type="similarity">
    <text evidence="1">Belongs to the UreD family.</text>
</comment>